<gene>
    <name type="primary">spoIISA</name>
    <name type="synonym">ykaC</name>
    <name type="ordered locus">BSU12830</name>
</gene>
<feature type="chain" id="PRO_0000072062" description="Stage II sporulation protein SA">
    <location>
        <begin position="1"/>
        <end position="248"/>
    </location>
</feature>
<feature type="topological domain" description="Extracellular" evidence="1">
    <location>
        <begin position="1"/>
        <end position="3"/>
    </location>
</feature>
<feature type="transmembrane region" description="Helical" evidence="1">
    <location>
        <begin position="4"/>
        <end position="21"/>
    </location>
</feature>
<feature type="topological domain" description="Cytoplasmic" evidence="1">
    <location>
        <begin position="22"/>
        <end position="41"/>
    </location>
</feature>
<feature type="transmembrane region" description="Helical" evidence="1">
    <location>
        <begin position="42"/>
        <end position="64"/>
    </location>
</feature>
<feature type="topological domain" description="Extracellular" evidence="1">
    <location>
        <begin position="65"/>
        <end position="67"/>
    </location>
</feature>
<feature type="transmembrane region" description="Helical" evidence="1">
    <location>
        <begin position="68"/>
        <end position="87"/>
    </location>
</feature>
<feature type="topological domain" description="Cytoplasmic" evidence="1">
    <location>
        <begin position="88"/>
        <end position="248"/>
    </location>
</feature>
<feature type="mutagenesis site" description="Loss of toxicity." evidence="2">
    <original>R</original>
    <variation>Q</variation>
    <location>
        <position position="38"/>
    </location>
</feature>
<feature type="mutagenesis site" description="In mut9; sporulation efficiency decreases by about 4 orders of magnitude." evidence="2">
    <original>L</original>
    <variation>F</variation>
    <location>
        <position position="103"/>
    </location>
</feature>
<feature type="helix" evidence="5">
    <location>
        <begin position="98"/>
        <end position="126"/>
    </location>
</feature>
<feature type="strand" evidence="5">
    <location>
        <begin position="129"/>
        <end position="135"/>
    </location>
</feature>
<feature type="helix" evidence="5">
    <location>
        <begin position="136"/>
        <end position="152"/>
    </location>
</feature>
<feature type="turn" evidence="5">
    <location>
        <begin position="153"/>
        <end position="155"/>
    </location>
</feature>
<feature type="strand" evidence="5">
    <location>
        <begin position="156"/>
        <end position="162"/>
    </location>
</feature>
<feature type="helix" evidence="5">
    <location>
        <begin position="166"/>
        <end position="173"/>
    </location>
</feature>
<feature type="helix" evidence="5">
    <location>
        <begin position="179"/>
        <end position="187"/>
    </location>
</feature>
<feature type="strand" evidence="5">
    <location>
        <begin position="197"/>
        <end position="206"/>
    </location>
</feature>
<feature type="strand" evidence="5">
    <location>
        <begin position="209"/>
        <end position="216"/>
    </location>
</feature>
<feature type="helix" evidence="5">
    <location>
        <begin position="223"/>
        <end position="239"/>
    </location>
</feature>
<evidence type="ECO:0000255" key="1"/>
<evidence type="ECO:0000269" key="2">
    <source>
    </source>
</evidence>
<evidence type="ECO:0000269" key="3">
    <source>
    </source>
</evidence>
<evidence type="ECO:0000305" key="4"/>
<evidence type="ECO:0007829" key="5">
    <source>
        <dbReference type="PDB" id="3O6Q"/>
    </source>
</evidence>
<accession>O34853</accession>
<organism>
    <name type="scientific">Bacillus subtilis (strain 168)</name>
    <dbReference type="NCBI Taxonomy" id="224308"/>
    <lineage>
        <taxon>Bacteria</taxon>
        <taxon>Bacillati</taxon>
        <taxon>Bacillota</taxon>
        <taxon>Bacilli</taxon>
        <taxon>Bacillales</taxon>
        <taxon>Bacillaceae</taxon>
        <taxon>Bacillus</taxon>
    </lineage>
</organism>
<dbReference type="EMBL" id="AJ002571">
    <property type="protein sequence ID" value="CAA05563.1"/>
    <property type="molecule type" value="Genomic_DNA"/>
</dbReference>
<dbReference type="EMBL" id="AL009126">
    <property type="protein sequence ID" value="CAB13140.1"/>
    <property type="molecule type" value="Genomic_DNA"/>
</dbReference>
<dbReference type="PIR" id="D69713">
    <property type="entry name" value="D69713"/>
</dbReference>
<dbReference type="RefSeq" id="NP_389166.1">
    <property type="nucleotide sequence ID" value="NC_000964.3"/>
</dbReference>
<dbReference type="RefSeq" id="WP_003244695.1">
    <property type="nucleotide sequence ID" value="NZ_OZ025638.1"/>
</dbReference>
<dbReference type="PDB" id="3O6Q">
    <property type="method" value="X-ray"/>
    <property type="resolution" value="2.50 A"/>
    <property type="chains" value="A/C=92-248"/>
</dbReference>
<dbReference type="PDBsum" id="3O6Q"/>
<dbReference type="SMR" id="O34853"/>
<dbReference type="FunCoup" id="O34853">
    <property type="interactions" value="11"/>
</dbReference>
<dbReference type="IntAct" id="O34853">
    <property type="interactions" value="1"/>
</dbReference>
<dbReference type="STRING" id="224308.BSU12830"/>
<dbReference type="TCDB" id="9.A.10.1.1">
    <property type="family name" value="the oligomeric probable pore-forming spoiia toxin (spoiia) family"/>
</dbReference>
<dbReference type="PaxDb" id="224308-BSU12830"/>
<dbReference type="EnsemblBacteria" id="CAB13140">
    <property type="protein sequence ID" value="CAB13140"/>
    <property type="gene ID" value="BSU_12830"/>
</dbReference>
<dbReference type="GeneID" id="938174"/>
<dbReference type="KEGG" id="bsu:BSU12830"/>
<dbReference type="PATRIC" id="fig|224308.179.peg.1392"/>
<dbReference type="eggNOG" id="ENOG5033VU0">
    <property type="taxonomic scope" value="Bacteria"/>
</dbReference>
<dbReference type="InParanoid" id="O34853"/>
<dbReference type="OrthoDB" id="2447993at2"/>
<dbReference type="BioCyc" id="BSUB:BSU12830-MONOMER"/>
<dbReference type="Proteomes" id="UP000001570">
    <property type="component" value="Chromosome"/>
</dbReference>
<dbReference type="GO" id="GO:0005886">
    <property type="term" value="C:plasma membrane"/>
    <property type="evidence" value="ECO:0007669"/>
    <property type="project" value="UniProtKB-SubCell"/>
</dbReference>
<dbReference type="GO" id="GO:0030435">
    <property type="term" value="P:sporulation resulting in formation of a cellular spore"/>
    <property type="evidence" value="ECO:0007669"/>
    <property type="project" value="UniProtKB-KW"/>
</dbReference>
<dbReference type="Gene3D" id="3.30.70.2720">
    <property type="match status" value="1"/>
</dbReference>
<dbReference type="Gene3D" id="1.20.5.460">
    <property type="entry name" value="Single helix bin"/>
    <property type="match status" value="1"/>
</dbReference>
<dbReference type="InterPro" id="IPR025940">
    <property type="entry name" value="SpoIISA_toxin"/>
</dbReference>
<dbReference type="Pfam" id="PF14171">
    <property type="entry name" value="SpoIISA_toxin"/>
    <property type="match status" value="1"/>
</dbReference>
<proteinExistence type="evidence at protein level"/>
<sequence>MVLFFQIMVWCIVAGLGLYVYATWRFEAKVKEKMSAIRKTWYLLFVLGAMVYWTYEPTSLFTHWERYLIVAVSFALIDAFIFLSAYVKKLAGSELETDTREILEENNEMLHMYLNRLKTYQYLLKNEPIHVYYGSIDAYAEGIDKLLKTYADKMNLTASLCHYSTQADKDRLTEHMDDPADVQTRLDRKDVYYDQYGKVVLIPFTIETQNYVIKLTSDSIVTEFDYLLFTSLTSIYDLVLPIEEEGEG</sequence>
<reference key="1">
    <citation type="submission" date="1997-11" db="EMBL/GenBank/DDBJ databases">
        <title>Sequence of the Bacillus subtilis genome between xlyA and ykoR.</title>
        <authorList>
            <person name="Devine K.M."/>
        </authorList>
    </citation>
    <scope>NUCLEOTIDE SEQUENCE [GENOMIC DNA]</scope>
    <source>
        <strain>168</strain>
    </source>
</reference>
<reference key="2">
    <citation type="journal article" date="1997" name="Nature">
        <title>The complete genome sequence of the Gram-positive bacterium Bacillus subtilis.</title>
        <authorList>
            <person name="Kunst F."/>
            <person name="Ogasawara N."/>
            <person name="Moszer I."/>
            <person name="Albertini A.M."/>
            <person name="Alloni G."/>
            <person name="Azevedo V."/>
            <person name="Bertero M.G."/>
            <person name="Bessieres P."/>
            <person name="Bolotin A."/>
            <person name="Borchert S."/>
            <person name="Borriss R."/>
            <person name="Boursier L."/>
            <person name="Brans A."/>
            <person name="Braun M."/>
            <person name="Brignell S.C."/>
            <person name="Bron S."/>
            <person name="Brouillet S."/>
            <person name="Bruschi C.V."/>
            <person name="Caldwell B."/>
            <person name="Capuano V."/>
            <person name="Carter N.M."/>
            <person name="Choi S.-K."/>
            <person name="Codani J.-J."/>
            <person name="Connerton I.F."/>
            <person name="Cummings N.J."/>
            <person name="Daniel R.A."/>
            <person name="Denizot F."/>
            <person name="Devine K.M."/>
            <person name="Duesterhoeft A."/>
            <person name="Ehrlich S.D."/>
            <person name="Emmerson P.T."/>
            <person name="Entian K.-D."/>
            <person name="Errington J."/>
            <person name="Fabret C."/>
            <person name="Ferrari E."/>
            <person name="Foulger D."/>
            <person name="Fritz C."/>
            <person name="Fujita M."/>
            <person name="Fujita Y."/>
            <person name="Fuma S."/>
            <person name="Galizzi A."/>
            <person name="Galleron N."/>
            <person name="Ghim S.-Y."/>
            <person name="Glaser P."/>
            <person name="Goffeau A."/>
            <person name="Golightly E.J."/>
            <person name="Grandi G."/>
            <person name="Guiseppi G."/>
            <person name="Guy B.J."/>
            <person name="Haga K."/>
            <person name="Haiech J."/>
            <person name="Harwood C.R."/>
            <person name="Henaut A."/>
            <person name="Hilbert H."/>
            <person name="Holsappel S."/>
            <person name="Hosono S."/>
            <person name="Hullo M.-F."/>
            <person name="Itaya M."/>
            <person name="Jones L.-M."/>
            <person name="Joris B."/>
            <person name="Karamata D."/>
            <person name="Kasahara Y."/>
            <person name="Klaerr-Blanchard M."/>
            <person name="Klein C."/>
            <person name="Kobayashi Y."/>
            <person name="Koetter P."/>
            <person name="Koningstein G."/>
            <person name="Krogh S."/>
            <person name="Kumano M."/>
            <person name="Kurita K."/>
            <person name="Lapidus A."/>
            <person name="Lardinois S."/>
            <person name="Lauber J."/>
            <person name="Lazarevic V."/>
            <person name="Lee S.-M."/>
            <person name="Levine A."/>
            <person name="Liu H."/>
            <person name="Masuda S."/>
            <person name="Mauel C."/>
            <person name="Medigue C."/>
            <person name="Medina N."/>
            <person name="Mellado R.P."/>
            <person name="Mizuno M."/>
            <person name="Moestl D."/>
            <person name="Nakai S."/>
            <person name="Noback M."/>
            <person name="Noone D."/>
            <person name="O'Reilly M."/>
            <person name="Ogawa K."/>
            <person name="Ogiwara A."/>
            <person name="Oudega B."/>
            <person name="Park S.-H."/>
            <person name="Parro V."/>
            <person name="Pohl T.M."/>
            <person name="Portetelle D."/>
            <person name="Porwollik S."/>
            <person name="Prescott A.M."/>
            <person name="Presecan E."/>
            <person name="Pujic P."/>
            <person name="Purnelle B."/>
            <person name="Rapoport G."/>
            <person name="Rey M."/>
            <person name="Reynolds S."/>
            <person name="Rieger M."/>
            <person name="Rivolta C."/>
            <person name="Rocha E."/>
            <person name="Roche B."/>
            <person name="Rose M."/>
            <person name="Sadaie Y."/>
            <person name="Sato T."/>
            <person name="Scanlan E."/>
            <person name="Schleich S."/>
            <person name="Schroeter R."/>
            <person name="Scoffone F."/>
            <person name="Sekiguchi J."/>
            <person name="Sekowska A."/>
            <person name="Seror S.J."/>
            <person name="Serror P."/>
            <person name="Shin B.-S."/>
            <person name="Soldo B."/>
            <person name="Sorokin A."/>
            <person name="Tacconi E."/>
            <person name="Takagi T."/>
            <person name="Takahashi H."/>
            <person name="Takemaru K."/>
            <person name="Takeuchi M."/>
            <person name="Tamakoshi A."/>
            <person name="Tanaka T."/>
            <person name="Terpstra P."/>
            <person name="Tognoni A."/>
            <person name="Tosato V."/>
            <person name="Uchiyama S."/>
            <person name="Vandenbol M."/>
            <person name="Vannier F."/>
            <person name="Vassarotti A."/>
            <person name="Viari A."/>
            <person name="Wambutt R."/>
            <person name="Wedler E."/>
            <person name="Wedler H."/>
            <person name="Weitzenegger T."/>
            <person name="Winters P."/>
            <person name="Wipat A."/>
            <person name="Yamamoto H."/>
            <person name="Yamane K."/>
            <person name="Yasumoto K."/>
            <person name="Yata K."/>
            <person name="Yoshida K."/>
            <person name="Yoshikawa H.-F."/>
            <person name="Zumstein E."/>
            <person name="Yoshikawa H."/>
            <person name="Danchin A."/>
        </authorList>
    </citation>
    <scope>NUCLEOTIDE SEQUENCE [LARGE SCALE GENOMIC DNA]</scope>
    <source>
        <strain>168</strain>
    </source>
</reference>
<reference key="3">
    <citation type="journal article" date="2001" name="J. Bacteriol.">
        <title>Bacillus subtilis locus encoding a killer protein and its antidote.</title>
        <authorList>
            <person name="Adler E."/>
            <person name="Barak I."/>
            <person name="Stragier P."/>
        </authorList>
    </citation>
    <scope>FUNCTION AS A TOXIN</scope>
    <scope>SUBUNIT</scope>
    <scope>MUTAGENESIS OF ARG-38 AND LEU-103</scope>
    <scope>INDUCTION</scope>
    <scope>DISRUPTION PHENOTYPE</scope>
    <source>
        <strain>168 / JH642</strain>
    </source>
</reference>
<reference key="4">
    <citation type="journal article" date="2008" name="FEMS Microbiol. Lett.">
        <title>Expression of functional Bacillus SpoIISAB toxin-antitoxin modules in Escherichia coli.</title>
        <authorList>
            <person name="Florek P."/>
            <person name="Muchova K."/>
            <person name="Pavelcikova P."/>
            <person name="Barak I."/>
        </authorList>
    </citation>
    <scope>EXPRESSION IN E.COLI</scope>
    <source>
        <strain>168 / JH642</strain>
    </source>
</reference>
<reference key="5">
    <citation type="journal article" date="2010" name="Res. Microbiol.">
        <title>Expression and localization of SpoIISA toxin during the life cycle of Bacillus subtilis.</title>
        <authorList>
            <person name="Resetarova S."/>
            <person name="Florek P."/>
            <person name="Muchova K."/>
            <person name="Wilkinson A.J."/>
            <person name="Barak I."/>
        </authorList>
    </citation>
    <scope>SUBCELLULAR LOCATION</scope>
    <scope>INDUCTION</scope>
    <source>
        <strain>168 / PY79</strain>
    </source>
</reference>
<reference key="6">
    <citation type="journal article" date="2011" name="J. Biol. Chem.">
        <title>The structure and interactions of SpoIISA and SpoIISB, a toxin-antitoxin system in Bacillus subtilis.</title>
        <authorList>
            <person name="Florek P."/>
            <person name="Levdikov V.M."/>
            <person name="Blagova E."/>
            <person name="Lebedev A.A."/>
            <person name="Skrabana R."/>
            <person name="Resetarova S."/>
            <person name="Pavelcikova P."/>
            <person name="Barak I."/>
            <person name="Wilkinson A.J."/>
        </authorList>
    </citation>
    <scope>X-RAY CRYSTALLOGRAPHY (2.5 ANGSTROMS) OF 92-248</scope>
    <scope>INTERACTION WITH SPOIISB</scope>
    <source>
        <strain>168 / PY79</strain>
    </source>
</reference>
<protein>
    <recommendedName>
        <fullName>Stage II sporulation protein SA</fullName>
    </recommendedName>
    <alternativeName>
        <fullName>Killer protein SpoIISA</fullName>
    </alternativeName>
    <alternativeName>
        <fullName>Toxin SpoIISA</fullName>
    </alternativeName>
</protein>
<comment type="function">
    <text evidence="2">Toxic component of a type II toxin-antitoxin (TA) system. Its toxic activity is neutralized by cognate antitoxin SpoIISB. Expression in the absence of SpoIISB permits sporulation to stage II, when plasmolysis zones and holes in the peptidoglycan layer are observed, resulting in cell death. Lethal when synthesized during vegetative growth in the absence of SpoIISB. In E.coli both the membrane bound and soluble domain are required in cis for toxin activity.</text>
</comment>
<comment type="subunit">
    <text evidence="2">Probably forms an oligomer; X-ray data suggests the inactive complex forms a heterotetramer of SpoIISA(2)-SpoIISB(2), which inactivates the toxic activity of SpoIISA.</text>
</comment>
<comment type="interaction">
    <interactant intactId="EBI-4406150">
        <id>O34853</id>
    </interactant>
    <interactant intactId="EBI-4406141">
        <id>O34800</id>
        <label>spoIISB</label>
    </interactant>
    <organismsDiffer>false</organismsDiffer>
    <experiments>3</experiments>
</comment>
<comment type="subcellular location">
    <subcellularLocation>
        <location evidence="3">Cell membrane</location>
        <topology evidence="3">Multi-pass membrane protein</topology>
    </subcellularLocation>
</comment>
<comment type="induction">
    <text evidence="2 3">Expressed at low levels during exponential growth, it increases dramatically at the onset of sporulation (at protein level). A member of the spoIISA-spoIISB operon.</text>
</comment>
<comment type="disruption phenotype">
    <text evidence="2">No change in sporulation efficiency.</text>
</comment>
<comment type="similarity">
    <text evidence="4">Belongs to the SpoIISA toxin family.</text>
</comment>
<name>SP2SA_BACSU</name>
<keyword id="KW-0002">3D-structure</keyword>
<keyword id="KW-1003">Cell membrane</keyword>
<keyword id="KW-0472">Membrane</keyword>
<keyword id="KW-1185">Reference proteome</keyword>
<keyword id="KW-0749">Sporulation</keyword>
<keyword id="KW-1277">Toxin-antitoxin system</keyword>
<keyword id="KW-0812">Transmembrane</keyword>
<keyword id="KW-1133">Transmembrane helix</keyword>